<keyword id="KW-0028">Amino-acid biosynthesis</keyword>
<keyword id="KW-0963">Cytoplasm</keyword>
<keyword id="KW-0220">Diaminopimelate biosynthesis</keyword>
<keyword id="KW-0456">Lyase</keyword>
<keyword id="KW-0457">Lysine biosynthesis</keyword>
<keyword id="KW-0704">Schiff base</keyword>
<protein>
    <recommendedName>
        <fullName evidence="1">4-hydroxy-tetrahydrodipicolinate synthase</fullName>
        <shortName evidence="1">HTPA synthase</shortName>
        <ecNumber evidence="1">4.3.3.7</ecNumber>
    </recommendedName>
</protein>
<name>DAPA_SHEB9</name>
<reference key="1">
    <citation type="submission" date="2007-11" db="EMBL/GenBank/DDBJ databases">
        <title>Complete sequence of chromosome of Shewanella baltica OS195.</title>
        <authorList>
            <consortium name="US DOE Joint Genome Institute"/>
            <person name="Copeland A."/>
            <person name="Lucas S."/>
            <person name="Lapidus A."/>
            <person name="Barry K."/>
            <person name="Glavina del Rio T."/>
            <person name="Dalin E."/>
            <person name="Tice H."/>
            <person name="Pitluck S."/>
            <person name="Chain P."/>
            <person name="Malfatti S."/>
            <person name="Shin M."/>
            <person name="Vergez L."/>
            <person name="Schmutz J."/>
            <person name="Larimer F."/>
            <person name="Land M."/>
            <person name="Hauser L."/>
            <person name="Kyrpides N."/>
            <person name="Kim E."/>
            <person name="Brettar I."/>
            <person name="Rodrigues J."/>
            <person name="Konstantinidis K."/>
            <person name="Klappenbach J."/>
            <person name="Hofle M."/>
            <person name="Tiedje J."/>
            <person name="Richardson P."/>
        </authorList>
    </citation>
    <scope>NUCLEOTIDE SEQUENCE [LARGE SCALE GENOMIC DNA]</scope>
    <source>
        <strain>OS195</strain>
    </source>
</reference>
<organism>
    <name type="scientific">Shewanella baltica (strain OS195)</name>
    <dbReference type="NCBI Taxonomy" id="399599"/>
    <lineage>
        <taxon>Bacteria</taxon>
        <taxon>Pseudomonadati</taxon>
        <taxon>Pseudomonadota</taxon>
        <taxon>Gammaproteobacteria</taxon>
        <taxon>Alteromonadales</taxon>
        <taxon>Shewanellaceae</taxon>
        <taxon>Shewanella</taxon>
    </lineage>
</organism>
<comment type="function">
    <text evidence="1">Catalyzes the condensation of (S)-aspartate-beta-semialdehyde [(S)-ASA] and pyruvate to 4-hydroxy-tetrahydrodipicolinate (HTPA).</text>
</comment>
<comment type="catalytic activity">
    <reaction evidence="1">
        <text>L-aspartate 4-semialdehyde + pyruvate = (2S,4S)-4-hydroxy-2,3,4,5-tetrahydrodipicolinate + H2O + H(+)</text>
        <dbReference type="Rhea" id="RHEA:34171"/>
        <dbReference type="ChEBI" id="CHEBI:15361"/>
        <dbReference type="ChEBI" id="CHEBI:15377"/>
        <dbReference type="ChEBI" id="CHEBI:15378"/>
        <dbReference type="ChEBI" id="CHEBI:67139"/>
        <dbReference type="ChEBI" id="CHEBI:537519"/>
        <dbReference type="EC" id="4.3.3.7"/>
    </reaction>
</comment>
<comment type="pathway">
    <text evidence="1">Amino-acid biosynthesis; L-lysine biosynthesis via DAP pathway; (S)-tetrahydrodipicolinate from L-aspartate: step 3/4.</text>
</comment>
<comment type="subunit">
    <text evidence="1">Homotetramer; dimer of dimers.</text>
</comment>
<comment type="subcellular location">
    <subcellularLocation>
        <location evidence="1">Cytoplasm</location>
    </subcellularLocation>
</comment>
<comment type="similarity">
    <text evidence="1">Belongs to the DapA family.</text>
</comment>
<comment type="caution">
    <text evidence="2">Was originally thought to be a dihydrodipicolinate synthase (DHDPS), catalyzing the condensation of (S)-aspartate-beta-semialdehyde [(S)-ASA] and pyruvate to dihydrodipicolinate (DHDP). However, it was shown in E.coli that the product of the enzymatic reaction is not dihydrodipicolinate but in fact (4S)-4-hydroxy-2,3,4,5-tetrahydro-(2S)-dipicolinic acid (HTPA), and that the consecutive dehydration reaction leading to DHDP is not spontaneous but catalyzed by DapB.</text>
</comment>
<proteinExistence type="inferred from homology"/>
<sequence>MINGSIVALITPMNSDGSVDFASLERLVEFHIDQGTDAIVAVGTTGESATLPMSEHVTVVSQTVKFAAGRVPVIGGNGANATSEAVELTKSLSKVGVAAMLGVTPYYNKPTPKGLIAHYKAVAASTDIPQILYNVPGRTAVDMLPETVAELVSVSNIIGVKEATGDLSRVKRLRELCGDDFLLYSGDDATAREFLLLGGNGVISVANNIVPQAFKAMCDAALAGNAELALSIDTPLRGLYSTLFCEANPIPVKWAAHRMGLIECGHIRLPLTELSEQCHGLLIEAMTRAQIEVK</sequence>
<gene>
    <name evidence="1" type="primary">dapA</name>
    <name type="ordered locus">Sbal195_2667</name>
</gene>
<feature type="chain" id="PRO_1000080538" description="4-hydroxy-tetrahydrodipicolinate synthase">
    <location>
        <begin position="1"/>
        <end position="294"/>
    </location>
</feature>
<feature type="active site" description="Proton donor/acceptor" evidence="1">
    <location>
        <position position="133"/>
    </location>
</feature>
<feature type="active site" description="Schiff-base intermediate with substrate" evidence="1">
    <location>
        <position position="161"/>
    </location>
</feature>
<feature type="binding site" evidence="1">
    <location>
        <position position="45"/>
    </location>
    <ligand>
        <name>pyruvate</name>
        <dbReference type="ChEBI" id="CHEBI:15361"/>
    </ligand>
</feature>
<feature type="binding site" evidence="1">
    <location>
        <position position="203"/>
    </location>
    <ligand>
        <name>pyruvate</name>
        <dbReference type="ChEBI" id="CHEBI:15361"/>
    </ligand>
</feature>
<feature type="site" description="Part of a proton relay during catalysis" evidence="1">
    <location>
        <position position="44"/>
    </location>
</feature>
<feature type="site" description="Part of a proton relay during catalysis" evidence="1">
    <location>
        <position position="107"/>
    </location>
</feature>
<evidence type="ECO:0000255" key="1">
    <source>
        <dbReference type="HAMAP-Rule" id="MF_00418"/>
    </source>
</evidence>
<evidence type="ECO:0000305" key="2"/>
<accession>A9L573</accession>
<dbReference type="EC" id="4.3.3.7" evidence="1"/>
<dbReference type="EMBL" id="CP000891">
    <property type="protein sequence ID" value="ABX49835.1"/>
    <property type="molecule type" value="Genomic_DNA"/>
</dbReference>
<dbReference type="RefSeq" id="WP_006082060.1">
    <property type="nucleotide sequence ID" value="NC_009997.1"/>
</dbReference>
<dbReference type="SMR" id="A9L573"/>
<dbReference type="GeneID" id="11772756"/>
<dbReference type="KEGG" id="sbn:Sbal195_2667"/>
<dbReference type="HOGENOM" id="CLU_049343_7_1_6"/>
<dbReference type="UniPathway" id="UPA00034">
    <property type="reaction ID" value="UER00017"/>
</dbReference>
<dbReference type="Proteomes" id="UP000000770">
    <property type="component" value="Chromosome"/>
</dbReference>
<dbReference type="GO" id="GO:0005829">
    <property type="term" value="C:cytosol"/>
    <property type="evidence" value="ECO:0007669"/>
    <property type="project" value="TreeGrafter"/>
</dbReference>
<dbReference type="GO" id="GO:0008840">
    <property type="term" value="F:4-hydroxy-tetrahydrodipicolinate synthase activity"/>
    <property type="evidence" value="ECO:0007669"/>
    <property type="project" value="UniProtKB-UniRule"/>
</dbReference>
<dbReference type="GO" id="GO:0019877">
    <property type="term" value="P:diaminopimelate biosynthetic process"/>
    <property type="evidence" value="ECO:0007669"/>
    <property type="project" value="UniProtKB-UniRule"/>
</dbReference>
<dbReference type="GO" id="GO:0009089">
    <property type="term" value="P:lysine biosynthetic process via diaminopimelate"/>
    <property type="evidence" value="ECO:0007669"/>
    <property type="project" value="UniProtKB-UniRule"/>
</dbReference>
<dbReference type="CDD" id="cd00950">
    <property type="entry name" value="DHDPS"/>
    <property type="match status" value="1"/>
</dbReference>
<dbReference type="Gene3D" id="3.20.20.70">
    <property type="entry name" value="Aldolase class I"/>
    <property type="match status" value="1"/>
</dbReference>
<dbReference type="HAMAP" id="MF_00418">
    <property type="entry name" value="DapA"/>
    <property type="match status" value="1"/>
</dbReference>
<dbReference type="InterPro" id="IPR013785">
    <property type="entry name" value="Aldolase_TIM"/>
</dbReference>
<dbReference type="InterPro" id="IPR005263">
    <property type="entry name" value="DapA"/>
</dbReference>
<dbReference type="InterPro" id="IPR002220">
    <property type="entry name" value="DapA-like"/>
</dbReference>
<dbReference type="InterPro" id="IPR020625">
    <property type="entry name" value="Schiff_base-form_aldolases_AS"/>
</dbReference>
<dbReference type="InterPro" id="IPR020624">
    <property type="entry name" value="Schiff_base-form_aldolases_CS"/>
</dbReference>
<dbReference type="NCBIfam" id="TIGR00674">
    <property type="entry name" value="dapA"/>
    <property type="match status" value="1"/>
</dbReference>
<dbReference type="PANTHER" id="PTHR12128:SF66">
    <property type="entry name" value="4-HYDROXY-2-OXOGLUTARATE ALDOLASE, MITOCHONDRIAL"/>
    <property type="match status" value="1"/>
</dbReference>
<dbReference type="PANTHER" id="PTHR12128">
    <property type="entry name" value="DIHYDRODIPICOLINATE SYNTHASE"/>
    <property type="match status" value="1"/>
</dbReference>
<dbReference type="Pfam" id="PF00701">
    <property type="entry name" value="DHDPS"/>
    <property type="match status" value="1"/>
</dbReference>
<dbReference type="PIRSF" id="PIRSF001365">
    <property type="entry name" value="DHDPS"/>
    <property type="match status" value="1"/>
</dbReference>
<dbReference type="PRINTS" id="PR00146">
    <property type="entry name" value="DHPICSNTHASE"/>
</dbReference>
<dbReference type="SMART" id="SM01130">
    <property type="entry name" value="DHDPS"/>
    <property type="match status" value="1"/>
</dbReference>
<dbReference type="SUPFAM" id="SSF51569">
    <property type="entry name" value="Aldolase"/>
    <property type="match status" value="1"/>
</dbReference>
<dbReference type="PROSITE" id="PS00665">
    <property type="entry name" value="DHDPS_1"/>
    <property type="match status" value="1"/>
</dbReference>
<dbReference type="PROSITE" id="PS00666">
    <property type="entry name" value="DHDPS_2"/>
    <property type="match status" value="1"/>
</dbReference>